<gene>
    <name evidence="1" type="primary">secA1</name>
    <name type="ordered locus">Nmul_A2485</name>
</gene>
<organism>
    <name type="scientific">Nitrosospira multiformis (strain ATCC 25196 / NCIMB 11849 / C 71)</name>
    <dbReference type="NCBI Taxonomy" id="323848"/>
    <lineage>
        <taxon>Bacteria</taxon>
        <taxon>Pseudomonadati</taxon>
        <taxon>Pseudomonadota</taxon>
        <taxon>Betaproteobacteria</taxon>
        <taxon>Nitrosomonadales</taxon>
        <taxon>Nitrosomonadaceae</taxon>
        <taxon>Nitrosospira</taxon>
    </lineage>
</organism>
<name>SECA1_NITMU</name>
<dbReference type="EC" id="7.4.2.8" evidence="1"/>
<dbReference type="EMBL" id="CP000103">
    <property type="protein sequence ID" value="ABB75774.1"/>
    <property type="molecule type" value="Genomic_DNA"/>
</dbReference>
<dbReference type="RefSeq" id="WP_011381773.1">
    <property type="nucleotide sequence ID" value="NC_007614.1"/>
</dbReference>
<dbReference type="SMR" id="Q2Y647"/>
<dbReference type="STRING" id="323848.Nmul_A2485"/>
<dbReference type="KEGG" id="nmu:Nmul_A2485"/>
<dbReference type="eggNOG" id="COG0653">
    <property type="taxonomic scope" value="Bacteria"/>
</dbReference>
<dbReference type="HOGENOM" id="CLU_005314_3_0_4"/>
<dbReference type="OrthoDB" id="9805579at2"/>
<dbReference type="Proteomes" id="UP000002718">
    <property type="component" value="Chromosome"/>
</dbReference>
<dbReference type="GO" id="GO:0031522">
    <property type="term" value="C:cell envelope Sec protein transport complex"/>
    <property type="evidence" value="ECO:0007669"/>
    <property type="project" value="TreeGrafter"/>
</dbReference>
<dbReference type="GO" id="GO:0005829">
    <property type="term" value="C:cytosol"/>
    <property type="evidence" value="ECO:0007669"/>
    <property type="project" value="TreeGrafter"/>
</dbReference>
<dbReference type="GO" id="GO:0005886">
    <property type="term" value="C:plasma membrane"/>
    <property type="evidence" value="ECO:0007669"/>
    <property type="project" value="UniProtKB-SubCell"/>
</dbReference>
<dbReference type="GO" id="GO:0005524">
    <property type="term" value="F:ATP binding"/>
    <property type="evidence" value="ECO:0007669"/>
    <property type="project" value="UniProtKB-UniRule"/>
</dbReference>
<dbReference type="GO" id="GO:0046872">
    <property type="term" value="F:metal ion binding"/>
    <property type="evidence" value="ECO:0007669"/>
    <property type="project" value="UniProtKB-KW"/>
</dbReference>
<dbReference type="GO" id="GO:0008564">
    <property type="term" value="F:protein-exporting ATPase activity"/>
    <property type="evidence" value="ECO:0007669"/>
    <property type="project" value="UniProtKB-EC"/>
</dbReference>
<dbReference type="GO" id="GO:0065002">
    <property type="term" value="P:intracellular protein transmembrane transport"/>
    <property type="evidence" value="ECO:0007669"/>
    <property type="project" value="UniProtKB-UniRule"/>
</dbReference>
<dbReference type="GO" id="GO:0017038">
    <property type="term" value="P:protein import"/>
    <property type="evidence" value="ECO:0007669"/>
    <property type="project" value="InterPro"/>
</dbReference>
<dbReference type="GO" id="GO:0006605">
    <property type="term" value="P:protein targeting"/>
    <property type="evidence" value="ECO:0007669"/>
    <property type="project" value="UniProtKB-UniRule"/>
</dbReference>
<dbReference type="GO" id="GO:0043952">
    <property type="term" value="P:protein transport by the Sec complex"/>
    <property type="evidence" value="ECO:0007669"/>
    <property type="project" value="TreeGrafter"/>
</dbReference>
<dbReference type="CDD" id="cd17928">
    <property type="entry name" value="DEXDc_SecA"/>
    <property type="match status" value="1"/>
</dbReference>
<dbReference type="CDD" id="cd18803">
    <property type="entry name" value="SF2_C_secA"/>
    <property type="match status" value="1"/>
</dbReference>
<dbReference type="FunFam" id="3.40.50.300:FF:000113">
    <property type="entry name" value="Preprotein translocase subunit SecA"/>
    <property type="match status" value="1"/>
</dbReference>
<dbReference type="FunFam" id="3.90.1440.10:FF:000001">
    <property type="entry name" value="Preprotein translocase subunit SecA"/>
    <property type="match status" value="1"/>
</dbReference>
<dbReference type="FunFam" id="1.10.3060.10:FF:000003">
    <property type="entry name" value="Protein translocase subunit SecA"/>
    <property type="match status" value="1"/>
</dbReference>
<dbReference type="FunFam" id="3.40.50.300:FF:000334">
    <property type="entry name" value="Protein translocase subunit SecA"/>
    <property type="match status" value="1"/>
</dbReference>
<dbReference type="Gene3D" id="1.10.3060.10">
    <property type="entry name" value="Helical scaffold and wing domains of SecA"/>
    <property type="match status" value="1"/>
</dbReference>
<dbReference type="Gene3D" id="3.40.50.300">
    <property type="entry name" value="P-loop containing nucleotide triphosphate hydrolases"/>
    <property type="match status" value="2"/>
</dbReference>
<dbReference type="Gene3D" id="3.90.1440.10">
    <property type="entry name" value="SecA, preprotein cross-linking domain"/>
    <property type="match status" value="1"/>
</dbReference>
<dbReference type="HAMAP" id="MF_01382">
    <property type="entry name" value="SecA"/>
    <property type="match status" value="1"/>
</dbReference>
<dbReference type="InterPro" id="IPR014001">
    <property type="entry name" value="Helicase_ATP-bd"/>
</dbReference>
<dbReference type="InterPro" id="IPR001650">
    <property type="entry name" value="Helicase_C-like"/>
</dbReference>
<dbReference type="InterPro" id="IPR027417">
    <property type="entry name" value="P-loop_NTPase"/>
</dbReference>
<dbReference type="InterPro" id="IPR004027">
    <property type="entry name" value="SEC_C_motif"/>
</dbReference>
<dbReference type="InterPro" id="IPR000185">
    <property type="entry name" value="SecA"/>
</dbReference>
<dbReference type="InterPro" id="IPR020937">
    <property type="entry name" value="SecA_CS"/>
</dbReference>
<dbReference type="InterPro" id="IPR011115">
    <property type="entry name" value="SecA_DEAD"/>
</dbReference>
<dbReference type="InterPro" id="IPR014018">
    <property type="entry name" value="SecA_motor_DEAD"/>
</dbReference>
<dbReference type="InterPro" id="IPR011130">
    <property type="entry name" value="SecA_preprotein_X-link_dom"/>
</dbReference>
<dbReference type="InterPro" id="IPR044722">
    <property type="entry name" value="SecA_SF2_C"/>
</dbReference>
<dbReference type="InterPro" id="IPR011116">
    <property type="entry name" value="SecA_Wing/Scaffold"/>
</dbReference>
<dbReference type="InterPro" id="IPR036266">
    <property type="entry name" value="SecA_Wing/Scaffold_sf"/>
</dbReference>
<dbReference type="InterPro" id="IPR036670">
    <property type="entry name" value="SecA_X-link_sf"/>
</dbReference>
<dbReference type="NCBIfam" id="NF009538">
    <property type="entry name" value="PRK12904.1"/>
    <property type="match status" value="1"/>
</dbReference>
<dbReference type="NCBIfam" id="TIGR00963">
    <property type="entry name" value="secA"/>
    <property type="match status" value="1"/>
</dbReference>
<dbReference type="PANTHER" id="PTHR30612:SF0">
    <property type="entry name" value="CHLOROPLAST PROTEIN-TRANSPORTING ATPASE"/>
    <property type="match status" value="1"/>
</dbReference>
<dbReference type="PANTHER" id="PTHR30612">
    <property type="entry name" value="SECA INNER MEMBRANE COMPONENT OF SEC PROTEIN SECRETION SYSTEM"/>
    <property type="match status" value="1"/>
</dbReference>
<dbReference type="Pfam" id="PF21090">
    <property type="entry name" value="P-loop_SecA"/>
    <property type="match status" value="1"/>
</dbReference>
<dbReference type="Pfam" id="PF02810">
    <property type="entry name" value="SEC-C"/>
    <property type="match status" value="1"/>
</dbReference>
<dbReference type="Pfam" id="PF07517">
    <property type="entry name" value="SecA_DEAD"/>
    <property type="match status" value="1"/>
</dbReference>
<dbReference type="Pfam" id="PF01043">
    <property type="entry name" value="SecA_PP_bind"/>
    <property type="match status" value="1"/>
</dbReference>
<dbReference type="Pfam" id="PF07516">
    <property type="entry name" value="SecA_SW"/>
    <property type="match status" value="1"/>
</dbReference>
<dbReference type="PRINTS" id="PR00906">
    <property type="entry name" value="SECA"/>
</dbReference>
<dbReference type="SMART" id="SM00957">
    <property type="entry name" value="SecA_DEAD"/>
    <property type="match status" value="1"/>
</dbReference>
<dbReference type="SMART" id="SM00958">
    <property type="entry name" value="SecA_PP_bind"/>
    <property type="match status" value="1"/>
</dbReference>
<dbReference type="SUPFAM" id="SSF81886">
    <property type="entry name" value="Helical scaffold and wing domains of SecA"/>
    <property type="match status" value="1"/>
</dbReference>
<dbReference type="SUPFAM" id="SSF52540">
    <property type="entry name" value="P-loop containing nucleoside triphosphate hydrolases"/>
    <property type="match status" value="2"/>
</dbReference>
<dbReference type="SUPFAM" id="SSF81767">
    <property type="entry name" value="Pre-protein crosslinking domain of SecA"/>
    <property type="match status" value="1"/>
</dbReference>
<dbReference type="PROSITE" id="PS01312">
    <property type="entry name" value="SECA"/>
    <property type="match status" value="1"/>
</dbReference>
<dbReference type="PROSITE" id="PS51196">
    <property type="entry name" value="SECA_MOTOR_DEAD"/>
    <property type="match status" value="1"/>
</dbReference>
<evidence type="ECO:0000255" key="1">
    <source>
        <dbReference type="HAMAP-Rule" id="MF_01382"/>
    </source>
</evidence>
<evidence type="ECO:0000256" key="2">
    <source>
        <dbReference type="SAM" id="MobiDB-lite"/>
    </source>
</evidence>
<keyword id="KW-0067">ATP-binding</keyword>
<keyword id="KW-0997">Cell inner membrane</keyword>
<keyword id="KW-1003">Cell membrane</keyword>
<keyword id="KW-0963">Cytoplasm</keyword>
<keyword id="KW-0472">Membrane</keyword>
<keyword id="KW-0479">Metal-binding</keyword>
<keyword id="KW-0547">Nucleotide-binding</keyword>
<keyword id="KW-0653">Protein transport</keyword>
<keyword id="KW-1185">Reference proteome</keyword>
<keyword id="KW-1278">Translocase</keyword>
<keyword id="KW-0811">Translocation</keyword>
<keyword id="KW-0813">Transport</keyword>
<keyword id="KW-0862">Zinc</keyword>
<accession>Q2Y647</accession>
<feature type="chain" id="PRO_0000320873" description="Protein translocase subunit SecA 1">
    <location>
        <begin position="1"/>
        <end position="917"/>
    </location>
</feature>
<feature type="region of interest" description="Disordered" evidence="2">
    <location>
        <begin position="866"/>
        <end position="917"/>
    </location>
</feature>
<feature type="compositionally biased region" description="Basic residues" evidence="2">
    <location>
        <begin position="907"/>
        <end position="917"/>
    </location>
</feature>
<feature type="binding site" evidence="1">
    <location>
        <position position="87"/>
    </location>
    <ligand>
        <name>ATP</name>
        <dbReference type="ChEBI" id="CHEBI:30616"/>
    </ligand>
</feature>
<feature type="binding site" evidence="1">
    <location>
        <begin position="105"/>
        <end position="109"/>
    </location>
    <ligand>
        <name>ATP</name>
        <dbReference type="ChEBI" id="CHEBI:30616"/>
    </ligand>
</feature>
<feature type="binding site" evidence="1">
    <location>
        <position position="507"/>
    </location>
    <ligand>
        <name>ATP</name>
        <dbReference type="ChEBI" id="CHEBI:30616"/>
    </ligand>
</feature>
<feature type="binding site" evidence="1">
    <location>
        <position position="901"/>
    </location>
    <ligand>
        <name>Zn(2+)</name>
        <dbReference type="ChEBI" id="CHEBI:29105"/>
    </ligand>
</feature>
<feature type="binding site" evidence="1">
    <location>
        <position position="903"/>
    </location>
    <ligand>
        <name>Zn(2+)</name>
        <dbReference type="ChEBI" id="CHEBI:29105"/>
    </ligand>
</feature>
<feature type="binding site" evidence="1">
    <location>
        <position position="912"/>
    </location>
    <ligand>
        <name>Zn(2+)</name>
        <dbReference type="ChEBI" id="CHEBI:29105"/>
    </ligand>
</feature>
<feature type="binding site" evidence="1">
    <location>
        <position position="913"/>
    </location>
    <ligand>
        <name>Zn(2+)</name>
        <dbReference type="ChEBI" id="CHEBI:29105"/>
    </ligand>
</feature>
<sequence length="917" mass="103886">MLNNLLKKVFGSRNDRLIKQYSQNVTAINALEAKIGALSDAELRGKTEEFRQRIGEGADLDMLLPEAFAVVREAGKRVLGMRHFDVQLIGGMVLHDGKIAEMRTGEGKTLMATLPAYLNALAGKGVHLVTVNDYLAKRDAEWMGRIYRFLGISVGVILSQMDHGDKQAAYAADITYGTNNEYGFDYLRDNMVTHPLERVQRVLNFAIVDEVDSILIDEARTPLIISGQAEGNTDVYVRMNALIPKLVRQENEDSPGDFSVDEKAQQVLLSEAGFEHAEKLLVQSGLLPSGTSLYDPANINLVHHLYAGLRAHALFHRDQHYVIQNGEVVIVDEFTGRLMAGRRWSEGLHQAVEAKEGVTIQKENQTLASITFQNYFRMYEKLAGMTGTADTEAYEFQQIYGLETVIIPTHRPMIRVDRMDQVFRTMDEKYQAIIADIKDCQERGQPVLVGTTSIENNELLSSLLTREKLPHQVLNAKQHAREAEIVAQAGRPKMITIATNMAGRGTDIVLGGNPEPEFERIRSDESLSESEKTERIAELQQQWQTLHDEVLEKGGLHIIGTERHESRRVDNQLRGRSGRQGDPGSSRFYLSLEDALLRIFASDRVASIMQRLNMPQGEAIEHPWVTRAIENAQRKVEARNFDIRKQLLEYDDVANDQRKVIYQQRNELLESEDITETTTAMRADMLRNLIALHVPPQSVEEEWDISGLEKALAAEYHLTLPLREWLEKEPDLHEDSLHQRIIEAANALYSGKVEQVGAPIMHQYERAVMLQSLDMHWREHLASLDHLRQGIHLRGYAQKNPKQEYKREAFELFTSMLEEIKAEVSKTLMAVQIRSEQQVEAVAETHHAPVNVQYHHAAFEEALGEEKSPESIGEDIEGREHPQKHQPFVRQGEKIGRNDPCPCGSGKKYKQCHGKLN</sequence>
<protein>
    <recommendedName>
        <fullName evidence="1">Protein translocase subunit SecA 1</fullName>
        <ecNumber evidence="1">7.4.2.8</ecNumber>
    </recommendedName>
</protein>
<proteinExistence type="inferred from homology"/>
<reference key="1">
    <citation type="submission" date="2005-08" db="EMBL/GenBank/DDBJ databases">
        <title>Complete sequence of chromosome 1 of Nitrosospira multiformis ATCC 25196.</title>
        <authorList>
            <person name="Copeland A."/>
            <person name="Lucas S."/>
            <person name="Lapidus A."/>
            <person name="Barry K."/>
            <person name="Detter J.C."/>
            <person name="Glavina T."/>
            <person name="Hammon N."/>
            <person name="Israni S."/>
            <person name="Pitluck S."/>
            <person name="Chain P."/>
            <person name="Malfatti S."/>
            <person name="Shin M."/>
            <person name="Vergez L."/>
            <person name="Schmutz J."/>
            <person name="Larimer F."/>
            <person name="Land M."/>
            <person name="Hauser L."/>
            <person name="Kyrpides N."/>
            <person name="Lykidis A."/>
            <person name="Richardson P."/>
        </authorList>
    </citation>
    <scope>NUCLEOTIDE SEQUENCE [LARGE SCALE GENOMIC DNA]</scope>
    <source>
        <strain>ATCC 25196 / NCIMB 11849 / C 71</strain>
    </source>
</reference>
<comment type="function">
    <text evidence="1">Part of the Sec protein translocase complex. Interacts with the SecYEG preprotein conducting channel. Has a central role in coupling the hydrolysis of ATP to the transfer of proteins into and across the cell membrane, serving both as a receptor for the preprotein-SecB complex and as an ATP-driven molecular motor driving the stepwise translocation of polypeptide chains across the membrane.</text>
</comment>
<comment type="catalytic activity">
    <reaction evidence="1">
        <text>ATP + H2O + cellular proteinSide 1 = ADP + phosphate + cellular proteinSide 2.</text>
        <dbReference type="EC" id="7.4.2.8"/>
    </reaction>
</comment>
<comment type="cofactor">
    <cofactor evidence="1">
        <name>Zn(2+)</name>
        <dbReference type="ChEBI" id="CHEBI:29105"/>
    </cofactor>
    <text evidence="1">May bind 1 zinc ion per subunit.</text>
</comment>
<comment type="subunit">
    <text evidence="1">Monomer and homodimer. Part of the essential Sec protein translocation apparatus which comprises SecA, SecYEG and auxiliary proteins SecDF-YajC and YidC.</text>
</comment>
<comment type="subcellular location">
    <subcellularLocation>
        <location evidence="1">Cell inner membrane</location>
        <topology evidence="1">Peripheral membrane protein</topology>
        <orientation evidence="1">Cytoplasmic side</orientation>
    </subcellularLocation>
    <subcellularLocation>
        <location evidence="1">Cytoplasm</location>
    </subcellularLocation>
    <text evidence="1">Distribution is 50-50.</text>
</comment>
<comment type="similarity">
    <text evidence="1">Belongs to the SecA family.</text>
</comment>